<organism>
    <name type="scientific">Blumeria graminis</name>
    <name type="common">Powdery mildew</name>
    <name type="synonym">Oidium monilioides</name>
    <dbReference type="NCBI Taxonomy" id="34373"/>
    <lineage>
        <taxon>Eukaryota</taxon>
        <taxon>Fungi</taxon>
        <taxon>Dikarya</taxon>
        <taxon>Ascomycota</taxon>
        <taxon>Pezizomycotina</taxon>
        <taxon>Leotiomycetes</taxon>
        <taxon>Erysiphales</taxon>
        <taxon>Erysiphaceae</taxon>
        <taxon>Blumeria</taxon>
    </lineage>
</organism>
<proteinExistence type="inferred from homology"/>
<keyword id="KW-0010">Activator</keyword>
<keyword id="KW-0067">ATP-binding</keyword>
<keyword id="KW-0963">Cytoplasm</keyword>
<keyword id="KW-0418">Kinase</keyword>
<keyword id="KW-0547">Nucleotide-binding</keyword>
<keyword id="KW-0539">Nucleus</keyword>
<keyword id="KW-0597">Phosphoprotein</keyword>
<keyword id="KW-0723">Serine/threonine-protein kinase</keyword>
<keyword id="KW-0804">Transcription</keyword>
<keyword id="KW-0805">Transcription regulation</keyword>
<keyword id="KW-0808">Transferase</keyword>
<accession>Q8TGA9</accession>
<protein>
    <recommendedName>
        <fullName>Mitogen-activated protein kinase HOG1</fullName>
        <shortName>MAP kinase HOG1</shortName>
        <ecNumber evidence="2">2.7.11.24</ecNumber>
    </recommendedName>
</protein>
<gene>
    <name type="primary">HOG1</name>
    <name type="synonym">MAPIII</name>
</gene>
<dbReference type="EC" id="2.7.11.24" evidence="2"/>
<dbReference type="EMBL" id="AF350940">
    <property type="protein sequence ID" value="AAL83917.1"/>
    <property type="molecule type" value="Genomic_DNA"/>
</dbReference>
<dbReference type="SMR" id="Q8TGA9"/>
<dbReference type="EnsemblFungi" id="BLGH_02542-mRNA-1">
    <property type="protein sequence ID" value="BLGH_02542-mRNA-1"/>
    <property type="gene ID" value="BLGH_02542"/>
</dbReference>
<dbReference type="VEuPathDB" id="FungiDB:BGT96224V316_LOCUS2856"/>
<dbReference type="VEuPathDB" id="FungiDB:BGTH12_LOCUS2603"/>
<dbReference type="OMA" id="NRYTDLN"/>
<dbReference type="GO" id="GO:0005737">
    <property type="term" value="C:cytoplasm"/>
    <property type="evidence" value="ECO:0007669"/>
    <property type="project" value="UniProtKB-SubCell"/>
</dbReference>
<dbReference type="GO" id="GO:0005634">
    <property type="term" value="C:nucleus"/>
    <property type="evidence" value="ECO:0007669"/>
    <property type="project" value="UniProtKB-SubCell"/>
</dbReference>
<dbReference type="GO" id="GO:0005524">
    <property type="term" value="F:ATP binding"/>
    <property type="evidence" value="ECO:0007669"/>
    <property type="project" value="UniProtKB-KW"/>
</dbReference>
<dbReference type="GO" id="GO:0004707">
    <property type="term" value="F:MAP kinase activity"/>
    <property type="evidence" value="ECO:0007669"/>
    <property type="project" value="UniProtKB-EC"/>
</dbReference>
<dbReference type="GO" id="GO:0106310">
    <property type="term" value="F:protein serine kinase activity"/>
    <property type="evidence" value="ECO:0007669"/>
    <property type="project" value="RHEA"/>
</dbReference>
<dbReference type="GO" id="GO:0051403">
    <property type="term" value="P:stress-activated MAPK cascade"/>
    <property type="evidence" value="ECO:0007669"/>
    <property type="project" value="InterPro"/>
</dbReference>
<dbReference type="CDD" id="cd07856">
    <property type="entry name" value="STKc_Sty1_Hog1"/>
    <property type="match status" value="1"/>
</dbReference>
<dbReference type="FunFam" id="1.10.510.10:FF:000049">
    <property type="entry name" value="Mitogen-activated protein kinase"/>
    <property type="match status" value="1"/>
</dbReference>
<dbReference type="FunFam" id="3.30.200.20:FF:000050">
    <property type="entry name" value="Mitogen-activated protein kinase"/>
    <property type="match status" value="1"/>
</dbReference>
<dbReference type="Gene3D" id="3.30.200.20">
    <property type="entry name" value="Phosphorylase Kinase, domain 1"/>
    <property type="match status" value="1"/>
</dbReference>
<dbReference type="Gene3D" id="1.10.510.10">
    <property type="entry name" value="Transferase(Phosphotransferase) domain 1"/>
    <property type="match status" value="1"/>
</dbReference>
<dbReference type="InterPro" id="IPR011009">
    <property type="entry name" value="Kinase-like_dom_sf"/>
</dbReference>
<dbReference type="InterPro" id="IPR050117">
    <property type="entry name" value="MAP_kinase"/>
</dbReference>
<dbReference type="InterPro" id="IPR003527">
    <property type="entry name" value="MAP_kinase_CS"/>
</dbReference>
<dbReference type="InterPro" id="IPR008352">
    <property type="entry name" value="MAPK_p38-like"/>
</dbReference>
<dbReference type="InterPro" id="IPR038783">
    <property type="entry name" value="MAPK_Sty1/Hog1"/>
</dbReference>
<dbReference type="InterPro" id="IPR000719">
    <property type="entry name" value="Prot_kinase_dom"/>
</dbReference>
<dbReference type="InterPro" id="IPR017441">
    <property type="entry name" value="Protein_kinase_ATP_BS"/>
</dbReference>
<dbReference type="InterPro" id="IPR008271">
    <property type="entry name" value="Ser/Thr_kinase_AS"/>
</dbReference>
<dbReference type="PANTHER" id="PTHR24055">
    <property type="entry name" value="MITOGEN-ACTIVATED PROTEIN KINASE"/>
    <property type="match status" value="1"/>
</dbReference>
<dbReference type="Pfam" id="PF00069">
    <property type="entry name" value="Pkinase"/>
    <property type="match status" value="1"/>
</dbReference>
<dbReference type="PRINTS" id="PR01773">
    <property type="entry name" value="P38MAPKINASE"/>
</dbReference>
<dbReference type="SMART" id="SM00220">
    <property type="entry name" value="S_TKc"/>
    <property type="match status" value="1"/>
</dbReference>
<dbReference type="SUPFAM" id="SSF56112">
    <property type="entry name" value="Protein kinase-like (PK-like)"/>
    <property type="match status" value="1"/>
</dbReference>
<dbReference type="PROSITE" id="PS01351">
    <property type="entry name" value="MAPK"/>
    <property type="match status" value="1"/>
</dbReference>
<dbReference type="PROSITE" id="PS00107">
    <property type="entry name" value="PROTEIN_KINASE_ATP"/>
    <property type="match status" value="1"/>
</dbReference>
<dbReference type="PROSITE" id="PS50011">
    <property type="entry name" value="PROTEIN_KINASE_DOM"/>
    <property type="match status" value="1"/>
</dbReference>
<dbReference type="PROSITE" id="PS00108">
    <property type="entry name" value="PROTEIN_KINASE_ST"/>
    <property type="match status" value="1"/>
</dbReference>
<sequence>MAEFVRAQIFGTTFEITSRYSDLQPVGMGAFGLVCSAKDNLTGQNVAVKKIMKPFSTPVLSKRTYRELKLLKHLRHENVISLSDIFISPLEDIYFVTELLGTDLHRLLTSRPLEKQFIQYFLYQILRGLKYVHSAGVVHRDLKPSNILVNENCDLKICDFGLARIQDPQMTGYVSTRYYRAPEIMLTWQKYDVEVDIWSAGCIFAEMLEGKPLFPGKDHVNQFSIITELLGTPPDDVIHTIASENTLRFVQSLPKRVRQPLKDKFTNADPLAIGLLEEMLVFDPRRRIKATDALAHEYLAPYHDPTDEPIALEKFDWSFNDADLPVDTWKIMMYSEILDYHNVDSENQAMEDPLECP</sequence>
<evidence type="ECO:0000250" key="1"/>
<evidence type="ECO:0000250" key="2">
    <source>
        <dbReference type="UniProtKB" id="P32485"/>
    </source>
</evidence>
<evidence type="ECO:0000250" key="3">
    <source>
        <dbReference type="UniProtKB" id="Q16539"/>
    </source>
</evidence>
<evidence type="ECO:0000250" key="4">
    <source>
        <dbReference type="UniProtKB" id="Q4WSF6"/>
    </source>
</evidence>
<evidence type="ECO:0000255" key="5">
    <source>
        <dbReference type="PROSITE-ProRule" id="PRU00159"/>
    </source>
</evidence>
<evidence type="ECO:0000255" key="6">
    <source>
        <dbReference type="PROSITE-ProRule" id="PRU10027"/>
    </source>
</evidence>
<reference key="1">
    <citation type="submission" date="2001-02" db="EMBL/GenBank/DDBJ databases">
        <title>Mitogen activated protein kinase (MAP III) involved in regulating cellular turgor during appressorium-mediated plant infection in Blumeria graminis.</title>
        <authorList>
            <person name="Zhang Z."/>
            <person name="Gurr S."/>
        </authorList>
    </citation>
    <scope>NUCLEOTIDE SEQUENCE [GENOMIC DNA]</scope>
</reference>
<comment type="function">
    <text evidence="4">Proline-directed serine/threonine-protein kinase involved in a signal transduction pathway that is activated by changes in the osmolarity of the extracellular environment. Controls osmotic regulation of transcription of target genes.</text>
</comment>
<comment type="catalytic activity">
    <reaction evidence="2">
        <text>L-seryl-[protein] + ATP = O-phospho-L-seryl-[protein] + ADP + H(+)</text>
        <dbReference type="Rhea" id="RHEA:17989"/>
        <dbReference type="Rhea" id="RHEA-COMP:9863"/>
        <dbReference type="Rhea" id="RHEA-COMP:11604"/>
        <dbReference type="ChEBI" id="CHEBI:15378"/>
        <dbReference type="ChEBI" id="CHEBI:29999"/>
        <dbReference type="ChEBI" id="CHEBI:30616"/>
        <dbReference type="ChEBI" id="CHEBI:83421"/>
        <dbReference type="ChEBI" id="CHEBI:456216"/>
        <dbReference type="EC" id="2.7.11.24"/>
    </reaction>
    <physiologicalReaction direction="left-to-right" evidence="2">
        <dbReference type="Rhea" id="RHEA:17990"/>
    </physiologicalReaction>
</comment>
<comment type="catalytic activity">
    <reaction evidence="2">
        <text>L-threonyl-[protein] + ATP = O-phospho-L-threonyl-[protein] + ADP + H(+)</text>
        <dbReference type="Rhea" id="RHEA:46608"/>
        <dbReference type="Rhea" id="RHEA-COMP:11060"/>
        <dbReference type="Rhea" id="RHEA-COMP:11605"/>
        <dbReference type="ChEBI" id="CHEBI:15378"/>
        <dbReference type="ChEBI" id="CHEBI:30013"/>
        <dbReference type="ChEBI" id="CHEBI:30616"/>
        <dbReference type="ChEBI" id="CHEBI:61977"/>
        <dbReference type="ChEBI" id="CHEBI:456216"/>
        <dbReference type="EC" id="2.7.11.24"/>
    </reaction>
    <physiologicalReaction direction="left-to-right" evidence="2">
        <dbReference type="Rhea" id="RHEA:46609"/>
    </physiologicalReaction>
</comment>
<comment type="cofactor">
    <cofactor evidence="3">
        <name>Mg(2+)</name>
        <dbReference type="ChEBI" id="CHEBI:18420"/>
    </cofactor>
</comment>
<comment type="activity regulation">
    <text evidence="1">Activated by tyrosine and threonine phosphorylation.</text>
</comment>
<comment type="subcellular location">
    <subcellularLocation>
        <location evidence="1">Cytoplasm</location>
    </subcellularLocation>
    <subcellularLocation>
        <location evidence="1">Nucleus</location>
    </subcellularLocation>
</comment>
<comment type="domain">
    <text>The TXY motif contains the threonine and tyrosine residues whose phosphorylation activates the MAP kinases.</text>
</comment>
<comment type="PTM">
    <text evidence="1">Dually phosphorylated on Thr-171 and Tyr-173, which activates the enzyme.</text>
</comment>
<comment type="similarity">
    <text evidence="5">Belongs to the protein kinase superfamily. Ser/Thr protein kinase family. MAP kinase subfamily. HOG1 sub-subfamily.</text>
</comment>
<name>HOG1_BLUGR</name>
<feature type="chain" id="PRO_0000289678" description="Mitogen-activated protein kinase HOG1">
    <location>
        <begin position="1"/>
        <end position="357"/>
    </location>
</feature>
<feature type="domain" description="Protein kinase" evidence="5">
    <location>
        <begin position="20"/>
        <end position="299"/>
    </location>
</feature>
<feature type="short sequence motif" description="TXY">
    <location>
        <begin position="171"/>
        <end position="173"/>
    </location>
</feature>
<feature type="active site" description="Proton acceptor" evidence="5 6">
    <location>
        <position position="141"/>
    </location>
</feature>
<feature type="binding site" evidence="5">
    <location>
        <begin position="26"/>
        <end position="34"/>
    </location>
    <ligand>
        <name>ATP</name>
        <dbReference type="ChEBI" id="CHEBI:30616"/>
    </ligand>
</feature>
<feature type="binding site" evidence="5">
    <location>
        <position position="49"/>
    </location>
    <ligand>
        <name>ATP</name>
        <dbReference type="ChEBI" id="CHEBI:30616"/>
    </ligand>
</feature>
<feature type="modified residue" description="Phosphothreonine" evidence="1">
    <location>
        <position position="171"/>
    </location>
</feature>
<feature type="modified residue" description="Phosphotyrosine" evidence="1">
    <location>
        <position position="173"/>
    </location>
</feature>